<accession>Q5AZY3</accession>
<accession>C8V2A8</accession>
<reference key="1">
    <citation type="journal article" date="2005" name="Nature">
        <title>Sequencing of Aspergillus nidulans and comparative analysis with A. fumigatus and A. oryzae.</title>
        <authorList>
            <person name="Galagan J.E."/>
            <person name="Calvo S.E."/>
            <person name="Cuomo C."/>
            <person name="Ma L.-J."/>
            <person name="Wortman J.R."/>
            <person name="Batzoglou S."/>
            <person name="Lee S.-I."/>
            <person name="Bastuerkmen M."/>
            <person name="Spevak C.C."/>
            <person name="Clutterbuck J."/>
            <person name="Kapitonov V."/>
            <person name="Jurka J."/>
            <person name="Scazzocchio C."/>
            <person name="Farman M.L."/>
            <person name="Butler J."/>
            <person name="Purcell S."/>
            <person name="Harris S."/>
            <person name="Braus G.H."/>
            <person name="Draht O."/>
            <person name="Busch S."/>
            <person name="D'Enfert C."/>
            <person name="Bouchier C."/>
            <person name="Goldman G.H."/>
            <person name="Bell-Pedersen D."/>
            <person name="Griffiths-Jones S."/>
            <person name="Doonan J.H."/>
            <person name="Yu J."/>
            <person name="Vienken K."/>
            <person name="Pain A."/>
            <person name="Freitag M."/>
            <person name="Selker E.U."/>
            <person name="Archer D.B."/>
            <person name="Penalva M.A."/>
            <person name="Oakley B.R."/>
            <person name="Momany M."/>
            <person name="Tanaka T."/>
            <person name="Kumagai T."/>
            <person name="Asai K."/>
            <person name="Machida M."/>
            <person name="Nierman W.C."/>
            <person name="Denning D.W."/>
            <person name="Caddick M.X."/>
            <person name="Hynes M."/>
            <person name="Paoletti M."/>
            <person name="Fischer R."/>
            <person name="Miller B.L."/>
            <person name="Dyer P.S."/>
            <person name="Sachs M.S."/>
            <person name="Osmani S.A."/>
            <person name="Birren B.W."/>
        </authorList>
    </citation>
    <scope>NUCLEOTIDE SEQUENCE [LARGE SCALE GENOMIC DNA]</scope>
    <source>
        <strain>FGSC A4 / ATCC 38163 / CBS 112.46 / NRRL 194 / M139</strain>
    </source>
</reference>
<reference key="2">
    <citation type="journal article" date="2009" name="Fungal Genet. Biol.">
        <title>The 2008 update of the Aspergillus nidulans genome annotation: a community effort.</title>
        <authorList>
            <person name="Wortman J.R."/>
            <person name="Gilsenan J.M."/>
            <person name="Joardar V."/>
            <person name="Deegan J."/>
            <person name="Clutterbuck J."/>
            <person name="Andersen M.R."/>
            <person name="Archer D."/>
            <person name="Bencina M."/>
            <person name="Braus G."/>
            <person name="Coutinho P."/>
            <person name="von Dohren H."/>
            <person name="Doonan J."/>
            <person name="Driessen A.J."/>
            <person name="Durek P."/>
            <person name="Espeso E."/>
            <person name="Fekete E."/>
            <person name="Flipphi M."/>
            <person name="Estrada C.G."/>
            <person name="Geysens S."/>
            <person name="Goldman G."/>
            <person name="de Groot P.W."/>
            <person name="Hansen K."/>
            <person name="Harris S.D."/>
            <person name="Heinekamp T."/>
            <person name="Helmstaedt K."/>
            <person name="Henrissat B."/>
            <person name="Hofmann G."/>
            <person name="Homan T."/>
            <person name="Horio T."/>
            <person name="Horiuchi H."/>
            <person name="James S."/>
            <person name="Jones M."/>
            <person name="Karaffa L."/>
            <person name="Karanyi Z."/>
            <person name="Kato M."/>
            <person name="Keller N."/>
            <person name="Kelly D.E."/>
            <person name="Kiel J.A."/>
            <person name="Kim J.M."/>
            <person name="van der Klei I.J."/>
            <person name="Klis F.M."/>
            <person name="Kovalchuk A."/>
            <person name="Krasevec N."/>
            <person name="Kubicek C.P."/>
            <person name="Liu B."/>
            <person name="Maccabe A."/>
            <person name="Meyer V."/>
            <person name="Mirabito P."/>
            <person name="Miskei M."/>
            <person name="Mos M."/>
            <person name="Mullins J."/>
            <person name="Nelson D.R."/>
            <person name="Nielsen J."/>
            <person name="Oakley B.R."/>
            <person name="Osmani S.A."/>
            <person name="Pakula T."/>
            <person name="Paszewski A."/>
            <person name="Paulsen I."/>
            <person name="Pilsyk S."/>
            <person name="Pocsi I."/>
            <person name="Punt P.J."/>
            <person name="Ram A.F."/>
            <person name="Ren Q."/>
            <person name="Robellet X."/>
            <person name="Robson G."/>
            <person name="Seiboth B."/>
            <person name="van Solingen P."/>
            <person name="Specht T."/>
            <person name="Sun J."/>
            <person name="Taheri-Talesh N."/>
            <person name="Takeshita N."/>
            <person name="Ussery D."/>
            <person name="vanKuyk P.A."/>
            <person name="Visser H."/>
            <person name="van de Vondervoort P.J."/>
            <person name="de Vries R.P."/>
            <person name="Walton J."/>
            <person name="Xiang X."/>
            <person name="Xiong Y."/>
            <person name="Zeng A.P."/>
            <person name="Brandt B.W."/>
            <person name="Cornell M.J."/>
            <person name="van den Hondel C.A."/>
            <person name="Visser J."/>
            <person name="Oliver S.G."/>
            <person name="Turner G."/>
        </authorList>
    </citation>
    <scope>GENOME REANNOTATION</scope>
    <source>
        <strain>FGSC A4 / ATCC 38163 / CBS 112.46 / NRRL 194 / M139</strain>
    </source>
</reference>
<organism>
    <name type="scientific">Emericella nidulans (strain FGSC A4 / ATCC 38163 / CBS 112.46 / NRRL 194 / M139)</name>
    <name type="common">Aspergillus nidulans</name>
    <dbReference type="NCBI Taxonomy" id="227321"/>
    <lineage>
        <taxon>Eukaryota</taxon>
        <taxon>Fungi</taxon>
        <taxon>Dikarya</taxon>
        <taxon>Ascomycota</taxon>
        <taxon>Pezizomycotina</taxon>
        <taxon>Eurotiomycetes</taxon>
        <taxon>Eurotiomycetidae</taxon>
        <taxon>Eurotiales</taxon>
        <taxon>Aspergillaceae</taxon>
        <taxon>Aspergillus</taxon>
        <taxon>Aspergillus subgen. Nidulantes</taxon>
    </lineage>
</organism>
<feature type="chain" id="PRO_0000281803" description="Histone-lysine N-methyltransferase set9">
    <location>
        <begin position="1"/>
        <end position="641"/>
    </location>
</feature>
<feature type="domain" description="SET" evidence="3">
    <location>
        <begin position="120"/>
        <end position="234"/>
    </location>
</feature>
<feature type="region of interest" description="Disordered" evidence="5">
    <location>
        <begin position="261"/>
        <end position="388"/>
    </location>
</feature>
<feature type="region of interest" description="Disordered" evidence="5">
    <location>
        <begin position="596"/>
        <end position="628"/>
    </location>
</feature>
<feature type="compositionally biased region" description="Low complexity" evidence="5">
    <location>
        <begin position="348"/>
        <end position="359"/>
    </location>
</feature>
<feature type="compositionally biased region" description="Polar residues" evidence="5">
    <location>
        <begin position="361"/>
        <end position="381"/>
    </location>
</feature>
<feature type="compositionally biased region" description="Basic and acidic residues" evidence="5">
    <location>
        <begin position="608"/>
        <end position="625"/>
    </location>
</feature>
<comment type="function">
    <text evidence="2">Histone methyltransferase that trimethylates 'Lys-20' of histone H4 to form H4K20me3.</text>
</comment>
<comment type="catalytic activity">
    <reaction evidence="2 4">
        <text>L-lysyl(20)-[histone H4] + 3 S-adenosyl-L-methionine = N(6),N(6),N(6)-trimethyl-L-lysyl(20)-[histone H4] + 3 S-adenosyl-L-homocysteine + 3 H(+)</text>
        <dbReference type="Rhea" id="RHEA:64456"/>
        <dbReference type="Rhea" id="RHEA-COMP:15554"/>
        <dbReference type="Rhea" id="RHEA-COMP:15998"/>
        <dbReference type="ChEBI" id="CHEBI:15378"/>
        <dbReference type="ChEBI" id="CHEBI:29969"/>
        <dbReference type="ChEBI" id="CHEBI:57856"/>
        <dbReference type="ChEBI" id="CHEBI:59789"/>
        <dbReference type="ChEBI" id="CHEBI:61961"/>
        <dbReference type="EC" id="2.1.1.372"/>
    </reaction>
</comment>
<comment type="subcellular location">
    <subcellularLocation>
        <location evidence="1">Nucleus</location>
    </subcellularLocation>
    <subcellularLocation>
        <location evidence="1">Chromosome</location>
    </subcellularLocation>
</comment>
<comment type="similarity">
    <text evidence="4">Belongs to the class V-like SAM-binding methyltransferase superfamily. Histone-lysine methyltransferase family. Suvar4-20 subfamily.</text>
</comment>
<sequence length="641" mass="71748">MPSSKARSSPSVDRRERLTLAKLASYDDVATDALVDCAYFWTKTRKNRTKYIPVRGLAEDTVAHILLHDVIVAKDVSAAERKILDLIGMKRYLAKLPNDREKDWFRKHLRKYIQMYLPDCPFEVTTTNRYTITEHEAAICARKFIPQGQEIKYLSGTLVPMTKEEERDLDLKRKDFSIVMSSRRKTPSFFLGPARFANHDCSANGRLVTRGSEGMQVVATRDIYIGEEITVSYGEDYFGIDNCECLCLSCERVPRNGWSQNLAPGPQSKPSTPEPKASEDHLTPRKRKAQSDIDSDSSPSSTPRKRGKFTPRGSKLRSQLSLTEDIAISIESEPRVPSSNLALSAQEAGDSGKSSSAGDNVESSGTDSESLTSITPQESQRSSASTAATSVFDEAVSLNTRPTKSAVTTAAPAESSIAAEAPLSTTIPETDIKLEVEPSCEPTTTVTAQLDTTVRADSCVSDISSSTKLEDGSEALEHVKKPRKPRTKRVYLTIEPESKLNRVPGDYTKTPKLLAHSYDRWVDCHTCNAWFVQQNSYLTRRECPRCERHSMLYGFRWPKTEKEGPNDDEERVMDHRTIHRFLYPEEEALVSRRGRGVSFGLTPTPELSDMRSETPDSEALDERGNTRVTRRRTRAIRVTTV</sequence>
<gene>
    <name type="primary">set9</name>
    <name type="ORF">AN6147</name>
</gene>
<dbReference type="EC" id="2.1.1.372" evidence="2"/>
<dbReference type="EMBL" id="AACD01000105">
    <property type="protein sequence ID" value="EAA57933.1"/>
    <property type="molecule type" value="Genomic_DNA"/>
</dbReference>
<dbReference type="EMBL" id="BN001301">
    <property type="protein sequence ID" value="CBF70089.1"/>
    <property type="molecule type" value="Genomic_DNA"/>
</dbReference>
<dbReference type="RefSeq" id="XP_663751.1">
    <property type="nucleotide sequence ID" value="XM_658659.1"/>
</dbReference>
<dbReference type="SMR" id="Q5AZY3"/>
<dbReference type="STRING" id="227321.Q5AZY3"/>
<dbReference type="EnsemblFungi" id="CBF70089">
    <property type="protein sequence ID" value="CBF70089"/>
    <property type="gene ID" value="ANIA_06147"/>
</dbReference>
<dbReference type="KEGG" id="ani:ANIA_06147"/>
<dbReference type="VEuPathDB" id="FungiDB:AN6147"/>
<dbReference type="eggNOG" id="KOG2589">
    <property type="taxonomic scope" value="Eukaryota"/>
</dbReference>
<dbReference type="HOGENOM" id="CLU_013724_0_0_1"/>
<dbReference type="InParanoid" id="Q5AZY3"/>
<dbReference type="OMA" id="FANHDCG"/>
<dbReference type="OrthoDB" id="6627536at2759"/>
<dbReference type="Proteomes" id="UP000000560">
    <property type="component" value="Chromosome I"/>
</dbReference>
<dbReference type="GO" id="GO:0005694">
    <property type="term" value="C:chromosome"/>
    <property type="evidence" value="ECO:0007669"/>
    <property type="project" value="UniProtKB-SubCell"/>
</dbReference>
<dbReference type="GO" id="GO:0005634">
    <property type="term" value="C:nucleus"/>
    <property type="evidence" value="ECO:0000318"/>
    <property type="project" value="GO_Central"/>
</dbReference>
<dbReference type="GO" id="GO:0042799">
    <property type="term" value="F:histone H4K20 methyltransferase activity"/>
    <property type="evidence" value="ECO:0000318"/>
    <property type="project" value="GO_Central"/>
</dbReference>
<dbReference type="GO" id="GO:0140943">
    <property type="term" value="F:histone H4K20 trimethyltransferase activity"/>
    <property type="evidence" value="ECO:0007669"/>
    <property type="project" value="UniProtKB-EC"/>
</dbReference>
<dbReference type="GO" id="GO:0032259">
    <property type="term" value="P:methylation"/>
    <property type="evidence" value="ECO:0007669"/>
    <property type="project" value="UniProtKB-KW"/>
</dbReference>
<dbReference type="CDD" id="cd10524">
    <property type="entry name" value="SET_Suv4-20-like"/>
    <property type="match status" value="1"/>
</dbReference>
<dbReference type="Gene3D" id="1.10.10.1700">
    <property type="entry name" value="Histone-lysine N-methyltransferase"/>
    <property type="match status" value="1"/>
</dbReference>
<dbReference type="Gene3D" id="2.170.270.10">
    <property type="entry name" value="SET domain"/>
    <property type="match status" value="1"/>
</dbReference>
<dbReference type="InterPro" id="IPR041938">
    <property type="entry name" value="Hist-Lys_N-MTase_N"/>
</dbReference>
<dbReference type="InterPro" id="IPR025783">
    <property type="entry name" value="Set9_fungi"/>
</dbReference>
<dbReference type="InterPro" id="IPR001214">
    <property type="entry name" value="SET_dom"/>
</dbReference>
<dbReference type="InterPro" id="IPR046341">
    <property type="entry name" value="SET_dom_sf"/>
</dbReference>
<dbReference type="InterPro" id="IPR039977">
    <property type="entry name" value="Suv4-20/Set9"/>
</dbReference>
<dbReference type="PANTHER" id="PTHR12977:SF4">
    <property type="entry name" value="HISTONE-LYSINE N-METHYLTRANSFERASE KMT5B"/>
    <property type="match status" value="1"/>
</dbReference>
<dbReference type="PANTHER" id="PTHR12977">
    <property type="entry name" value="SUPPRESSOR OF VARIEGATION 4-20-RELATED"/>
    <property type="match status" value="1"/>
</dbReference>
<dbReference type="Pfam" id="PF00856">
    <property type="entry name" value="SET"/>
    <property type="match status" value="1"/>
</dbReference>
<dbReference type="SMART" id="SM00317">
    <property type="entry name" value="SET"/>
    <property type="match status" value="1"/>
</dbReference>
<dbReference type="SUPFAM" id="SSF82199">
    <property type="entry name" value="SET domain"/>
    <property type="match status" value="1"/>
</dbReference>
<dbReference type="PROSITE" id="PS51567">
    <property type="entry name" value="SAM_MT43_SUVAR420_1"/>
    <property type="match status" value="1"/>
</dbReference>
<dbReference type="PROSITE" id="PS50280">
    <property type="entry name" value="SET"/>
    <property type="match status" value="1"/>
</dbReference>
<protein>
    <recommendedName>
        <fullName>Histone-lysine N-methyltransferase set9</fullName>
        <ecNumber evidence="2">2.1.1.372</ecNumber>
    </recommendedName>
    <alternativeName>
        <fullName>SET domain protein 9</fullName>
    </alternativeName>
</protein>
<keyword id="KW-0156">Chromatin regulator</keyword>
<keyword id="KW-0158">Chromosome</keyword>
<keyword id="KW-0489">Methyltransferase</keyword>
<keyword id="KW-0539">Nucleus</keyword>
<keyword id="KW-1185">Reference proteome</keyword>
<keyword id="KW-0949">S-adenosyl-L-methionine</keyword>
<keyword id="KW-0808">Transferase</keyword>
<name>SET9_EMENI</name>
<proteinExistence type="inferred from homology"/>
<evidence type="ECO:0000250" key="1"/>
<evidence type="ECO:0000250" key="2">
    <source>
        <dbReference type="UniProtKB" id="Q9USK2"/>
    </source>
</evidence>
<evidence type="ECO:0000255" key="3">
    <source>
        <dbReference type="PROSITE-ProRule" id="PRU00190"/>
    </source>
</evidence>
<evidence type="ECO:0000255" key="4">
    <source>
        <dbReference type="PROSITE-ProRule" id="PRU00900"/>
    </source>
</evidence>
<evidence type="ECO:0000256" key="5">
    <source>
        <dbReference type="SAM" id="MobiDB-lite"/>
    </source>
</evidence>